<accession>Q8K2Z4</accession>
<accession>Q6ZQI1</accession>
<accession>Q8R0F2</accession>
<accession>Q8R3H0</accession>
<accession>Q922B7</accession>
<accession>Q923A3</accession>
<accession>Q9CS25</accession>
<accession>Q9CT32</accession>
<sequence>MSPHNFEFHLPLSPEELLKSGGVNQYVVREVLPVKHLSSQLRAFQSAFRAQGPLAILEHFDTVYSILHHFRSIEPGLKEDTLEFLKKVVSRHSQELSSILDDAALSGSDRSAHLNALKMNCYALIRLLESFENMTSQTSLIDLDIGGKGKRARAKATLGFDWEEERQPVLQLLTQLLQLDIRHLWNHSAIEEEFVSLVTGCCYRLLENPTISHQKNRSTKEAIAHLLGVALVRYNHMLSATVKIIQMLQHFEHLPPVLVTAVSLWATDYGMKSIVGEIVREIGQKCPQELSRDTAGAKGFAAFLTELAERIPAVLMANMCILLDHLDGENYMMRNAVLAAIAEMVLQVLNGDQLEESARETRDQFLDILQAHGHDVNSFVRSRVLQLFARIVQQKALPLTRFQAVVALAVGRLADKSVLVCKNAIQLLASFLANNPFSCKLSDIDLAGPLQKEIQKLQEMRAQRRSAAATAALDPEEEWDAMLPELKSTLQQLLKLPQEEGDHQIADAETAEEVKGRIRQLLAKASYKQAIVLTREATSHFQESEPFSHTEPEENSFLNLLGLIFKGPEASTQDSHGDTDPGLTGSKDSPSVPEPEGSQSNDELVKQEMLVQYLQDAYGFSQKITEAIGIISKMMYENTTTVVQEVIEFFVMVFQFGVPQALFGVRRMLPLIWSKEPGVREAVLNAYRQLYLNPKGDSARAKAQTLIHNLSLLLVDASVGTIQCLEEILCEFVQKDEVKPAVIQLLWERATEKVPSSPLERCSSVMLLGMMARGKPEIVGSNLDALVRVGLDEKSPQDYRLAQQVCLAIANISDRRKPSLGERHPPFRLPQEHRLFERLQDMVTKGFAHPDPLWIPFKEVAVTLTYQLAESPDVLCAQMLQGCAKQVLEKLEKNATEADPKETAPRLPTFLLMNLLSLAGDVALQQLVHLEQAVSGELGRRRVLREEQEHRAKEPKEKTASSETTMEEELGLVGGATADDTEAELIRSICEKELLDGNQVLAAFVPLLLKVCNNPGLYSNPELCAAASLALGKFCMISAPFCDSQLRLLFTMLEKSSLPTVRSNLMVATGDLAIRFPNLVDPWTPHLYARLRDPAQQVRKTAGLVMTHLILKDMVKVKGQVSEMAVLLIDPVPQIAALAKNFFNELSHKGNAIYNLLPDIISRLSDPEGGVEEEPFHTIMKQLLSYITKDKQTESLVEKLCQRFRTARTERQYRDLAYCMSQLPLTERGLQKMLDNFECFGDKLLDESVFSAFLSIVGKLRRGAKPEGKAIIDEFEQKLRACHTRGMDGIEEFETGQGGSQRALSAKKPSAVSRLQPLTSVDSDNDFVTPKPRRTKPGRPQTQQRKKSQRKAKVVFLSDESSEDELSAEMTEEETPKRTTPIRRASGRRHRS</sequence>
<reference key="1">
    <citation type="journal article" date="2003" name="DNA Res.">
        <title>Prediction of the coding sequences of mouse homologues of KIAA gene: III. The complete nucleotide sequences of 500 mouse KIAA-homologous cDNAs identified by screening of terminal sequences of cDNA clones randomly sampled from size-fractionated libraries.</title>
        <authorList>
            <person name="Okazaki N."/>
            <person name="Kikuno R."/>
            <person name="Ohara R."/>
            <person name="Inamoto S."/>
            <person name="Koseki H."/>
            <person name="Hiraoka S."/>
            <person name="Saga Y."/>
            <person name="Nagase T."/>
            <person name="Ohara O."/>
            <person name="Koga H."/>
        </authorList>
    </citation>
    <scope>NUCLEOTIDE SEQUENCE [LARGE SCALE MRNA] (ISOFORM 1)</scope>
    <source>
        <tissue>Embryonic tail</tissue>
    </source>
</reference>
<reference key="2">
    <citation type="journal article" date="2004" name="Genome Res.">
        <title>The status, quality, and expansion of the NIH full-length cDNA project: the Mammalian Gene Collection (MGC).</title>
        <authorList>
            <consortium name="The MGC Project Team"/>
        </authorList>
    </citation>
    <scope>NUCLEOTIDE SEQUENCE [LARGE SCALE MRNA] (ISOFORMS 1 AND 2)</scope>
    <source>
        <strain>C57BL/6J</strain>
        <strain>FVB/N</strain>
        <tissue>Mammary tumor</tissue>
        <tissue>Retina</tissue>
    </source>
</reference>
<reference key="3">
    <citation type="journal article" date="2005" name="Science">
        <title>The transcriptional landscape of the mammalian genome.</title>
        <authorList>
            <person name="Carninci P."/>
            <person name="Kasukawa T."/>
            <person name="Katayama S."/>
            <person name="Gough J."/>
            <person name="Frith M.C."/>
            <person name="Maeda N."/>
            <person name="Oyama R."/>
            <person name="Ravasi T."/>
            <person name="Lenhard B."/>
            <person name="Wells C."/>
            <person name="Kodzius R."/>
            <person name="Shimokawa K."/>
            <person name="Bajic V.B."/>
            <person name="Brenner S.E."/>
            <person name="Batalov S."/>
            <person name="Forrest A.R."/>
            <person name="Zavolan M."/>
            <person name="Davis M.J."/>
            <person name="Wilming L.G."/>
            <person name="Aidinis V."/>
            <person name="Allen J.E."/>
            <person name="Ambesi-Impiombato A."/>
            <person name="Apweiler R."/>
            <person name="Aturaliya R.N."/>
            <person name="Bailey T.L."/>
            <person name="Bansal M."/>
            <person name="Baxter L."/>
            <person name="Beisel K.W."/>
            <person name="Bersano T."/>
            <person name="Bono H."/>
            <person name="Chalk A.M."/>
            <person name="Chiu K.P."/>
            <person name="Choudhary V."/>
            <person name="Christoffels A."/>
            <person name="Clutterbuck D.R."/>
            <person name="Crowe M.L."/>
            <person name="Dalla E."/>
            <person name="Dalrymple B.P."/>
            <person name="de Bono B."/>
            <person name="Della Gatta G."/>
            <person name="di Bernardo D."/>
            <person name="Down T."/>
            <person name="Engstrom P."/>
            <person name="Fagiolini M."/>
            <person name="Faulkner G."/>
            <person name="Fletcher C.F."/>
            <person name="Fukushima T."/>
            <person name="Furuno M."/>
            <person name="Futaki S."/>
            <person name="Gariboldi M."/>
            <person name="Georgii-Hemming P."/>
            <person name="Gingeras T.R."/>
            <person name="Gojobori T."/>
            <person name="Green R.E."/>
            <person name="Gustincich S."/>
            <person name="Harbers M."/>
            <person name="Hayashi Y."/>
            <person name="Hensch T.K."/>
            <person name="Hirokawa N."/>
            <person name="Hill D."/>
            <person name="Huminiecki L."/>
            <person name="Iacono M."/>
            <person name="Ikeo K."/>
            <person name="Iwama A."/>
            <person name="Ishikawa T."/>
            <person name="Jakt M."/>
            <person name="Kanapin A."/>
            <person name="Katoh M."/>
            <person name="Kawasawa Y."/>
            <person name="Kelso J."/>
            <person name="Kitamura H."/>
            <person name="Kitano H."/>
            <person name="Kollias G."/>
            <person name="Krishnan S.P."/>
            <person name="Kruger A."/>
            <person name="Kummerfeld S.K."/>
            <person name="Kurochkin I.V."/>
            <person name="Lareau L.F."/>
            <person name="Lazarevic D."/>
            <person name="Lipovich L."/>
            <person name="Liu J."/>
            <person name="Liuni S."/>
            <person name="McWilliam S."/>
            <person name="Madan Babu M."/>
            <person name="Madera M."/>
            <person name="Marchionni L."/>
            <person name="Matsuda H."/>
            <person name="Matsuzawa S."/>
            <person name="Miki H."/>
            <person name="Mignone F."/>
            <person name="Miyake S."/>
            <person name="Morris K."/>
            <person name="Mottagui-Tabar S."/>
            <person name="Mulder N."/>
            <person name="Nakano N."/>
            <person name="Nakauchi H."/>
            <person name="Ng P."/>
            <person name="Nilsson R."/>
            <person name="Nishiguchi S."/>
            <person name="Nishikawa S."/>
            <person name="Nori F."/>
            <person name="Ohara O."/>
            <person name="Okazaki Y."/>
            <person name="Orlando V."/>
            <person name="Pang K.C."/>
            <person name="Pavan W.J."/>
            <person name="Pavesi G."/>
            <person name="Pesole G."/>
            <person name="Petrovsky N."/>
            <person name="Piazza S."/>
            <person name="Reed J."/>
            <person name="Reid J.F."/>
            <person name="Ring B.Z."/>
            <person name="Ringwald M."/>
            <person name="Rost B."/>
            <person name="Ruan Y."/>
            <person name="Salzberg S.L."/>
            <person name="Sandelin A."/>
            <person name="Schneider C."/>
            <person name="Schoenbach C."/>
            <person name="Sekiguchi K."/>
            <person name="Semple C.A."/>
            <person name="Seno S."/>
            <person name="Sessa L."/>
            <person name="Sheng Y."/>
            <person name="Shibata Y."/>
            <person name="Shimada H."/>
            <person name="Shimada K."/>
            <person name="Silva D."/>
            <person name="Sinclair B."/>
            <person name="Sperling S."/>
            <person name="Stupka E."/>
            <person name="Sugiura K."/>
            <person name="Sultana R."/>
            <person name="Takenaka Y."/>
            <person name="Taki K."/>
            <person name="Tammoja K."/>
            <person name="Tan S.L."/>
            <person name="Tang S."/>
            <person name="Taylor M.S."/>
            <person name="Tegner J."/>
            <person name="Teichmann S.A."/>
            <person name="Ueda H.R."/>
            <person name="van Nimwegen E."/>
            <person name="Verardo R."/>
            <person name="Wei C.L."/>
            <person name="Yagi K."/>
            <person name="Yamanishi H."/>
            <person name="Zabarovsky E."/>
            <person name="Zhu S."/>
            <person name="Zimmer A."/>
            <person name="Hide W."/>
            <person name="Bult C."/>
            <person name="Grimmond S.M."/>
            <person name="Teasdale R.D."/>
            <person name="Liu E.T."/>
            <person name="Brusic V."/>
            <person name="Quackenbush J."/>
            <person name="Wahlestedt C."/>
            <person name="Mattick J.S."/>
            <person name="Hume D.A."/>
            <person name="Kai C."/>
            <person name="Sasaki D."/>
            <person name="Tomaru Y."/>
            <person name="Fukuda S."/>
            <person name="Kanamori-Katayama M."/>
            <person name="Suzuki M."/>
            <person name="Aoki J."/>
            <person name="Arakawa T."/>
            <person name="Iida J."/>
            <person name="Imamura K."/>
            <person name="Itoh M."/>
            <person name="Kato T."/>
            <person name="Kawaji H."/>
            <person name="Kawagashira N."/>
            <person name="Kawashima T."/>
            <person name="Kojima M."/>
            <person name="Kondo S."/>
            <person name="Konno H."/>
            <person name="Nakano K."/>
            <person name="Ninomiya N."/>
            <person name="Nishio T."/>
            <person name="Okada M."/>
            <person name="Plessy C."/>
            <person name="Shibata K."/>
            <person name="Shiraki T."/>
            <person name="Suzuki S."/>
            <person name="Tagami M."/>
            <person name="Waki K."/>
            <person name="Watahiki A."/>
            <person name="Okamura-Oho Y."/>
            <person name="Suzuki H."/>
            <person name="Kawai J."/>
            <person name="Hayashizaki Y."/>
        </authorList>
    </citation>
    <scope>NUCLEOTIDE SEQUENCE [LARGE SCALE MRNA] OF 577-1392 (ISOFORM 1)</scope>
    <source>
        <strain>C57BL/6J</strain>
        <tissue>Embryo</tissue>
    </source>
</reference>
<reference key="4">
    <citation type="journal article" date="2007" name="Science">
        <title>ATM and ATR substrate analysis reveals extensive protein networks responsive to DNA damage.</title>
        <authorList>
            <person name="Matsuoka S."/>
            <person name="Ballif B.A."/>
            <person name="Smogorzewska A."/>
            <person name="McDonald E.R. III"/>
            <person name="Hurov K.E."/>
            <person name="Luo J."/>
            <person name="Bakalarski C.E."/>
            <person name="Zhao Z."/>
            <person name="Solimini N."/>
            <person name="Lerenthal Y."/>
            <person name="Shiloh Y."/>
            <person name="Gygi S.P."/>
            <person name="Elledge S.J."/>
        </authorList>
    </citation>
    <scope>PHOSPHORYLATION [LARGE SCALE ANALYSIS] AT SER-1300</scope>
    <scope>IDENTIFICATION BY MASS SPECTROMETRY [LARGE SCALE ANALYSIS]</scope>
    <source>
        <tissue>Embryonic fibroblast</tissue>
    </source>
</reference>
<reference key="5">
    <citation type="journal article" date="2009" name="Mol. Cell. Proteomics">
        <title>Large scale localization of protein phosphorylation by use of electron capture dissociation mass spectrometry.</title>
        <authorList>
            <person name="Sweet S.M."/>
            <person name="Bailey C.M."/>
            <person name="Cunningham D.L."/>
            <person name="Heath J.K."/>
            <person name="Cooper H.J."/>
        </authorList>
    </citation>
    <scope>PHOSPHORYLATION [LARGE SCALE ANALYSIS] AT SER-1320 AND SER-1323</scope>
    <scope>IDENTIFICATION BY MASS SPECTROMETRY [LARGE SCALE ANALYSIS]</scope>
    <source>
        <tissue>Embryonic fibroblast</tissue>
    </source>
</reference>
<reference key="6">
    <citation type="journal article" date="2010" name="Cell">
        <title>A tissue-specific atlas of mouse protein phosphorylation and expression.</title>
        <authorList>
            <person name="Huttlin E.L."/>
            <person name="Jedrychowski M.P."/>
            <person name="Elias J.E."/>
            <person name="Goswami T."/>
            <person name="Rad R."/>
            <person name="Beausoleil S.A."/>
            <person name="Villen J."/>
            <person name="Haas W."/>
            <person name="Sowa M.E."/>
            <person name="Gygi S.P."/>
        </authorList>
    </citation>
    <scope>PHOSPHORYLATION [LARGE SCALE ANALYSIS] AT SER-1323; THR-1329; SER-1358; SER-1361 AND SER-1362</scope>
    <scope>IDENTIFICATION BY MASS SPECTROMETRY [LARGE SCALE ANALYSIS]</scope>
    <source>
        <tissue>Brown adipose tissue</tissue>
        <tissue>Heart</tissue>
        <tissue>Kidney</tissue>
        <tissue>Liver</tissue>
        <tissue>Lung</tissue>
        <tissue>Pancreas</tissue>
        <tissue>Spleen</tissue>
        <tissue>Testis</tissue>
    </source>
</reference>
<organism>
    <name type="scientific">Mus musculus</name>
    <name type="common">Mouse</name>
    <dbReference type="NCBI Taxonomy" id="10090"/>
    <lineage>
        <taxon>Eukaryota</taxon>
        <taxon>Metazoa</taxon>
        <taxon>Chordata</taxon>
        <taxon>Craniata</taxon>
        <taxon>Vertebrata</taxon>
        <taxon>Euteleostomi</taxon>
        <taxon>Mammalia</taxon>
        <taxon>Eutheria</taxon>
        <taxon>Euarchontoglires</taxon>
        <taxon>Glires</taxon>
        <taxon>Rodentia</taxon>
        <taxon>Myomorpha</taxon>
        <taxon>Muroidea</taxon>
        <taxon>Muridae</taxon>
        <taxon>Murinae</taxon>
        <taxon>Mus</taxon>
        <taxon>Mus</taxon>
    </lineage>
</organism>
<protein>
    <recommendedName>
        <fullName>Condensin complex subunit 1</fullName>
    </recommendedName>
    <alternativeName>
        <fullName>Chromosome condensation-related SMC-associated protein 1</fullName>
    </alternativeName>
    <alternativeName>
        <fullName>Chromosome-associated protein D2</fullName>
        <shortName>mCAP-D2</shortName>
    </alternativeName>
    <alternativeName>
        <fullName>Non-SMC condensin I complex subunit D2</fullName>
    </alternativeName>
    <alternativeName>
        <fullName>XCAP-D2 homolog</fullName>
    </alternativeName>
</protein>
<evidence type="ECO:0000250" key="1"/>
<evidence type="ECO:0000250" key="2">
    <source>
        <dbReference type="UniProtKB" id="Q15021"/>
    </source>
</evidence>
<evidence type="ECO:0000256" key="3">
    <source>
        <dbReference type="SAM" id="MobiDB-lite"/>
    </source>
</evidence>
<evidence type="ECO:0000303" key="4">
    <source>
    </source>
</evidence>
<evidence type="ECO:0000305" key="5"/>
<evidence type="ECO:0007744" key="6">
    <source>
    </source>
</evidence>
<evidence type="ECO:0007744" key="7">
    <source>
    </source>
</evidence>
<evidence type="ECO:0007744" key="8">
    <source>
    </source>
</evidence>
<dbReference type="EMBL" id="AK129068">
    <property type="protein sequence ID" value="BAC97878.1"/>
    <property type="status" value="ALT_INIT"/>
    <property type="molecule type" value="mRNA"/>
</dbReference>
<dbReference type="EMBL" id="BC006673">
    <property type="protein sequence ID" value="AAH06673.1"/>
    <property type="status" value="ALT_SEQ"/>
    <property type="molecule type" value="mRNA"/>
</dbReference>
<dbReference type="EMBL" id="BC008592">
    <property type="protein sequence ID" value="AAH08592.1"/>
    <property type="molecule type" value="mRNA"/>
</dbReference>
<dbReference type="EMBL" id="BC025460">
    <property type="status" value="NOT_ANNOTATED_CDS"/>
    <property type="molecule type" value="mRNA"/>
</dbReference>
<dbReference type="EMBL" id="BC026982">
    <property type="protein sequence ID" value="AAH26982.1"/>
    <property type="molecule type" value="mRNA"/>
</dbReference>
<dbReference type="EMBL" id="BC029133">
    <property type="protein sequence ID" value="AAH29133.1"/>
    <property type="molecule type" value="mRNA"/>
</dbReference>
<dbReference type="EMBL" id="AK011352">
    <property type="protein sequence ID" value="BAB27560.1"/>
    <property type="molecule type" value="mRNA"/>
</dbReference>
<dbReference type="EMBL" id="AK019259">
    <property type="protein sequence ID" value="BAB31633.1"/>
    <property type="molecule type" value="mRNA"/>
</dbReference>
<dbReference type="CCDS" id="CCDS39636.1">
    <molecule id="Q8K2Z4-1"/>
</dbReference>
<dbReference type="RefSeq" id="NP_666283.1">
    <property type="nucleotide sequence ID" value="NM_146171.1"/>
</dbReference>
<dbReference type="RefSeq" id="XP_006506594.1">
    <property type="nucleotide sequence ID" value="XM_006506531.3"/>
</dbReference>
<dbReference type="SMR" id="Q8K2Z4"/>
<dbReference type="BioGRID" id="212791">
    <property type="interactions" value="15"/>
</dbReference>
<dbReference type="ComplexPortal" id="CPX-980">
    <property type="entry name" value="Condensin I complex"/>
</dbReference>
<dbReference type="FunCoup" id="Q8K2Z4">
    <property type="interactions" value="2094"/>
</dbReference>
<dbReference type="IntAct" id="Q8K2Z4">
    <property type="interactions" value="1"/>
</dbReference>
<dbReference type="STRING" id="10090.ENSMUSP00000042260"/>
<dbReference type="ChEMBL" id="CHEMBL4879496"/>
<dbReference type="iPTMnet" id="Q8K2Z4"/>
<dbReference type="PhosphoSitePlus" id="Q8K2Z4"/>
<dbReference type="jPOST" id="Q8K2Z4"/>
<dbReference type="PaxDb" id="10090-ENSMUSP00000042260"/>
<dbReference type="PeptideAtlas" id="Q8K2Z4"/>
<dbReference type="ProteomicsDB" id="283537">
    <molecule id="Q8K2Z4-1"/>
</dbReference>
<dbReference type="ProteomicsDB" id="283538">
    <molecule id="Q8K2Z4-2"/>
</dbReference>
<dbReference type="Pumba" id="Q8K2Z4"/>
<dbReference type="DNASU" id="68298"/>
<dbReference type="GeneID" id="68298"/>
<dbReference type="KEGG" id="mmu:68298"/>
<dbReference type="UCSC" id="uc009dtt.1">
    <molecule id="Q8K2Z4-1"/>
    <property type="organism name" value="mouse"/>
</dbReference>
<dbReference type="AGR" id="MGI:1915548"/>
<dbReference type="CTD" id="9918"/>
<dbReference type="MGI" id="MGI:1915548">
    <property type="gene designation" value="Ncapd2"/>
</dbReference>
<dbReference type="eggNOG" id="KOG0414">
    <property type="taxonomic scope" value="Eukaryota"/>
</dbReference>
<dbReference type="InParanoid" id="Q8K2Z4"/>
<dbReference type="OrthoDB" id="436262at2759"/>
<dbReference type="PhylomeDB" id="Q8K2Z4"/>
<dbReference type="TreeFam" id="TF105712"/>
<dbReference type="Reactome" id="R-MMU-2514853">
    <property type="pathway name" value="Condensation of Prometaphase Chromosomes"/>
</dbReference>
<dbReference type="BioGRID-ORCS" id="68298">
    <property type="hits" value="28 hits in 77 CRISPR screens"/>
</dbReference>
<dbReference type="ChiTaRS" id="Ncapd2">
    <property type="organism name" value="mouse"/>
</dbReference>
<dbReference type="PRO" id="PR:Q8K2Z4"/>
<dbReference type="Proteomes" id="UP000000589">
    <property type="component" value="Unplaced"/>
</dbReference>
<dbReference type="RNAct" id="Q8K2Z4">
    <property type="molecule type" value="protein"/>
</dbReference>
<dbReference type="GO" id="GO:0000793">
    <property type="term" value="C:condensed chromosome"/>
    <property type="evidence" value="ECO:0000314"/>
    <property type="project" value="MGI"/>
</dbReference>
<dbReference type="GO" id="GO:0000794">
    <property type="term" value="C:condensed nuclear chromosome"/>
    <property type="evidence" value="ECO:0000314"/>
    <property type="project" value="ComplexPortal"/>
</dbReference>
<dbReference type="GO" id="GO:0000796">
    <property type="term" value="C:condensin complex"/>
    <property type="evidence" value="ECO:0000314"/>
    <property type="project" value="MGI"/>
</dbReference>
<dbReference type="GO" id="GO:0005737">
    <property type="term" value="C:cytoplasm"/>
    <property type="evidence" value="ECO:0007669"/>
    <property type="project" value="UniProtKB-SubCell"/>
</dbReference>
<dbReference type="GO" id="GO:0045120">
    <property type="term" value="C:pronucleus"/>
    <property type="evidence" value="ECO:0000314"/>
    <property type="project" value="MGI"/>
</dbReference>
<dbReference type="GO" id="GO:0051301">
    <property type="term" value="P:cell division"/>
    <property type="evidence" value="ECO:0007669"/>
    <property type="project" value="UniProtKB-KW"/>
</dbReference>
<dbReference type="GO" id="GO:0007076">
    <property type="term" value="P:mitotic chromosome condensation"/>
    <property type="evidence" value="ECO:0000250"/>
    <property type="project" value="UniProtKB"/>
</dbReference>
<dbReference type="GO" id="GO:1905821">
    <property type="term" value="P:positive regulation of chromosome condensation"/>
    <property type="evidence" value="ECO:0000266"/>
    <property type="project" value="ComplexPortal"/>
</dbReference>
<dbReference type="GO" id="GO:0051984">
    <property type="term" value="P:positive regulation of chromosome segregation"/>
    <property type="evidence" value="ECO:0000315"/>
    <property type="project" value="ComplexPortal"/>
</dbReference>
<dbReference type="GO" id="GO:1905820">
    <property type="term" value="P:positive regulation of chromosome separation"/>
    <property type="evidence" value="ECO:0000315"/>
    <property type="project" value="ComplexPortal"/>
</dbReference>
<dbReference type="FunFam" id="1.25.10.10:FF:000695">
    <property type="entry name" value="Condensin complex subunit 1"/>
    <property type="match status" value="1"/>
</dbReference>
<dbReference type="Gene3D" id="1.25.10.10">
    <property type="entry name" value="Leucine-rich Repeat Variant"/>
    <property type="match status" value="1"/>
</dbReference>
<dbReference type="InterPro" id="IPR011989">
    <property type="entry name" value="ARM-like"/>
</dbReference>
<dbReference type="InterPro" id="IPR016024">
    <property type="entry name" value="ARM-type_fold"/>
</dbReference>
<dbReference type="InterPro" id="IPR026971">
    <property type="entry name" value="CND1/NCAPD3"/>
</dbReference>
<dbReference type="InterPro" id="IPR032682">
    <property type="entry name" value="Cnd1_C"/>
</dbReference>
<dbReference type="InterPro" id="IPR007673">
    <property type="entry name" value="Condensin_cplx_su1"/>
</dbReference>
<dbReference type="InterPro" id="IPR024324">
    <property type="entry name" value="Condensin_cplx_su1_N"/>
</dbReference>
<dbReference type="PANTHER" id="PTHR14222">
    <property type="entry name" value="CONDENSIN"/>
    <property type="match status" value="1"/>
</dbReference>
<dbReference type="PANTHER" id="PTHR14222:SF2">
    <property type="entry name" value="CONDENSIN COMPLEX SUBUNIT 1"/>
    <property type="match status" value="1"/>
</dbReference>
<dbReference type="Pfam" id="PF12717">
    <property type="entry name" value="Cnd1"/>
    <property type="match status" value="1"/>
</dbReference>
<dbReference type="Pfam" id="PF12922">
    <property type="entry name" value="Cnd1_N"/>
    <property type="match status" value="1"/>
</dbReference>
<dbReference type="PIRSF" id="PIRSF017127">
    <property type="entry name" value="Condensin_D2"/>
    <property type="match status" value="1"/>
</dbReference>
<dbReference type="SUPFAM" id="SSF48371">
    <property type="entry name" value="ARM repeat"/>
    <property type="match status" value="1"/>
</dbReference>
<name>CND1_MOUSE</name>
<gene>
    <name type="primary">Ncapd2</name>
    <name type="synonym">Capd2</name>
    <name type="synonym">Cnap1</name>
    <name type="synonym">Kiaa0159</name>
</gene>
<comment type="function">
    <text evidence="2">Regulatory subunit of the condensin complex, a complex required for conversion of interphase chromatin into mitotic-like condense chromosomes. The condensin complex probably introduces positive supercoils into relaxed DNA in the presence of type I topoisomerases and converts nicked DNA into positive knotted forms in the presence of type II topoisomerases. May target the condensin complex to DNA via its C-terminal domain. May promote the resolution of double-strand DNA catenanes (intertwines) between sister chromatids. Condensin-mediated compaction likely increases tension in catenated sister chromatids, providing directionality for type II topoisomerase-mediated strand exchanges toward chromatid decatenation. Required for decatenation of non-centromeric ultrafine DNA bridges during anaphase. Early in neurogenesis, may play an essential role to ensure accurate mitotic chromosome condensation in neuron stem cells, ultimately affecting neuron pool and cortex size.</text>
</comment>
<comment type="subunit">
    <text evidence="1">Component of the condensin complex, which contains the SMC2 and SMC4 heterodimer, and three non SMC subunits that probably regulate the complex: NCAPH/BRRN1, NCAPD2/CAPD2 and NCAPG. Interacts with histones H1 and H3 (By similarity).</text>
</comment>
<comment type="subcellular location">
    <subcellularLocation>
        <location evidence="1">Nucleus</location>
    </subcellularLocation>
    <subcellularLocation>
        <location evidence="1">Cytoplasm</location>
    </subcellularLocation>
    <subcellularLocation>
        <location evidence="1">Chromosome</location>
    </subcellularLocation>
    <text evidence="1">In interphase cells, the majority of the condensin complex is found in the cytoplasm, while a minority of the complex is associated with chromatin. A subpopulation of the complex however remains associated with chromosome foci in interphase cells. During mitosis, most of the condensin complex is associated with the chromatin. At the onset of prophase, the regulatory subunits of the complex are phosphorylated by CDK1, leading to condensin's association with chromosome arms and to chromosome condensation. Dissociation from chromosomes is observed in late telophase (By similarity).</text>
</comment>
<comment type="alternative products">
    <event type="alternative splicing"/>
    <isoform>
        <id>Q8K2Z4-1</id>
        <name>1</name>
        <sequence type="displayed"/>
    </isoform>
    <isoform>
        <id>Q8K2Z4-2</id>
        <name>2</name>
        <sequence type="described" ref="VSP_007246"/>
    </isoform>
</comment>
<comment type="domain">
    <text evidence="1">The C-terminal domain interacts with histones H1 and H3, and may be responsible for condensin complex targeting to mitotic chromosomes. This domain is independent from the bipartite nuclear localization signal, although they are contained within the same region (By similarity).</text>
</comment>
<comment type="PTM">
    <text evidence="1">Phosphorylated by CDK1. Its phosphorylation, as well as that of NCAPH and NCAPG subunits, activates the condensin complex and is required for chromosome condensation (By similarity).</text>
</comment>
<comment type="similarity">
    <text evidence="5">Belongs to the CND1 (condensin subunit 1) family.</text>
</comment>
<comment type="sequence caution" evidence="5">
    <conflict type="miscellaneous discrepancy">
        <sequence resource="EMBL-CDS" id="AAH06673"/>
    </conflict>
    <text>Contaminating sequence.</text>
</comment>
<comment type="sequence caution" evidence="5">
    <conflict type="erroneous initiation">
        <sequence resource="EMBL-CDS" id="BAC97878"/>
    </conflict>
    <text>Extended N-terminus.</text>
</comment>
<comment type="sequence caution" evidence="5">
    <conflict type="erroneous termination">
        <sequence resource="EMBL" id="BC025460"/>
    </conflict>
    <text>Truncated C-terminus.</text>
</comment>
<keyword id="KW-0025">Alternative splicing</keyword>
<keyword id="KW-0131">Cell cycle</keyword>
<keyword id="KW-0132">Cell division</keyword>
<keyword id="KW-0158">Chromosome</keyword>
<keyword id="KW-0963">Cytoplasm</keyword>
<keyword id="KW-0226">DNA condensation</keyword>
<keyword id="KW-0498">Mitosis</keyword>
<keyword id="KW-0539">Nucleus</keyword>
<keyword id="KW-0597">Phosphoprotein</keyword>
<keyword id="KW-1185">Reference proteome</keyword>
<feature type="chain" id="PRO_0000095036" description="Condensin complex subunit 1">
    <location>
        <begin position="1"/>
        <end position="1392"/>
    </location>
</feature>
<feature type="region of interest" description="Interaction with SMC2 and SMC4" evidence="1">
    <location>
        <begin position="1"/>
        <end position="593"/>
    </location>
</feature>
<feature type="region of interest" description="Disordered" evidence="3">
    <location>
        <begin position="569"/>
        <end position="602"/>
    </location>
</feature>
<feature type="region of interest" description="Disordered" evidence="3">
    <location>
        <begin position="945"/>
        <end position="966"/>
    </location>
</feature>
<feature type="region of interest" description="Disordered" evidence="3">
    <location>
        <begin position="1293"/>
        <end position="1392"/>
    </location>
</feature>
<feature type="short sequence motif" description="Bipartite nuclear localization signal" evidence="1">
    <location>
        <begin position="1332"/>
        <end position="1353"/>
    </location>
</feature>
<feature type="compositionally biased region" description="Basic and acidic residues" evidence="3">
    <location>
        <begin position="945"/>
        <end position="960"/>
    </location>
</feature>
<feature type="compositionally biased region" description="Basic residues" evidence="3">
    <location>
        <begin position="1344"/>
        <end position="1353"/>
    </location>
</feature>
<feature type="compositionally biased region" description="Acidic residues" evidence="3">
    <location>
        <begin position="1360"/>
        <end position="1373"/>
    </location>
</feature>
<feature type="modified residue" description="Phosphoserine" evidence="2">
    <location>
        <position position="20"/>
    </location>
</feature>
<feature type="modified residue" description="Phosphoserine" evidence="2">
    <location>
        <position position="575"/>
    </location>
</feature>
<feature type="modified residue" description="Phosphoserine" evidence="6">
    <location>
        <position position="1300"/>
    </location>
</feature>
<feature type="modified residue" description="Phosphoserine" evidence="2">
    <location>
        <position position="1305"/>
    </location>
</feature>
<feature type="modified residue" description="Phosphoserine" evidence="7">
    <location>
        <position position="1320"/>
    </location>
</feature>
<feature type="modified residue" description="Phosphoserine" evidence="7 8">
    <location>
        <position position="1323"/>
    </location>
</feature>
<feature type="modified residue" description="Phosphothreonine" evidence="8">
    <location>
        <position position="1329"/>
    </location>
</feature>
<feature type="modified residue" description="Phosphoserine" evidence="8">
    <location>
        <position position="1358"/>
    </location>
</feature>
<feature type="modified residue" description="Phosphoserine" evidence="8">
    <location>
        <position position="1361"/>
    </location>
</feature>
<feature type="modified residue" description="Phosphoserine" evidence="8">
    <location>
        <position position="1362"/>
    </location>
</feature>
<feature type="modified residue" description="Phosphoserine" evidence="2">
    <location>
        <position position="1367"/>
    </location>
</feature>
<feature type="modified residue" description="Phosphothreonine; by CDK1" evidence="1">
    <location>
        <position position="1375"/>
    </location>
</feature>
<feature type="modified residue" description="Phosphothreonine; by CDK1" evidence="1">
    <location>
        <position position="1380"/>
    </location>
</feature>
<feature type="modified residue" description="Phosphoserine" evidence="2">
    <location>
        <position position="1386"/>
    </location>
</feature>
<feature type="splice variant" id="VSP_007246" description="In isoform 2." evidence="4">
    <original>IRRASGRRHRS</original>
    <variation>TLVEVLVVCGFNMEMAFALRSFS</variation>
    <location>
        <begin position="1382"/>
        <end position="1392"/>
    </location>
</feature>
<feature type="sequence conflict" description="In Ref. 2; AAH26982." evidence="5" ref="2">
    <original>D</original>
    <variation>G</variation>
    <location>
        <position position="574"/>
    </location>
</feature>
<feature type="sequence conflict" description="In Ref. 2; AAH26982 and 3; BAB31633." evidence="5" ref="2 3">
    <original>I</original>
    <variation>V</variation>
    <location>
        <position position="1256"/>
    </location>
</feature>
<proteinExistence type="evidence at protein level"/>